<dbReference type="EC" id="2.1.1.182" evidence="1"/>
<dbReference type="EMBL" id="AE016795">
    <property type="protein sequence ID" value="AAO09175.1"/>
    <property type="molecule type" value="Genomic_DNA"/>
</dbReference>
<dbReference type="RefSeq" id="WP_011078742.1">
    <property type="nucleotide sequence ID" value="NC_004459.3"/>
</dbReference>
<dbReference type="SMR" id="Q8DED2"/>
<dbReference type="GeneID" id="93894970"/>
<dbReference type="KEGG" id="vvu:VV1_0663"/>
<dbReference type="HOGENOM" id="CLU_041220_0_1_6"/>
<dbReference type="Proteomes" id="UP000002275">
    <property type="component" value="Chromosome 1"/>
</dbReference>
<dbReference type="GO" id="GO:0005829">
    <property type="term" value="C:cytosol"/>
    <property type="evidence" value="ECO:0007669"/>
    <property type="project" value="TreeGrafter"/>
</dbReference>
<dbReference type="GO" id="GO:0052908">
    <property type="term" value="F:16S rRNA (adenine(1518)-N(6)/adenine(1519)-N(6))-dimethyltransferase activity"/>
    <property type="evidence" value="ECO:0007669"/>
    <property type="project" value="UniProtKB-EC"/>
</dbReference>
<dbReference type="GO" id="GO:0003723">
    <property type="term" value="F:RNA binding"/>
    <property type="evidence" value="ECO:0007669"/>
    <property type="project" value="UniProtKB-KW"/>
</dbReference>
<dbReference type="FunFam" id="1.10.8.100:FF:000001">
    <property type="entry name" value="Ribosomal RNA small subunit methyltransferase A"/>
    <property type="match status" value="1"/>
</dbReference>
<dbReference type="FunFam" id="3.40.50.150:FF:000006">
    <property type="entry name" value="Ribosomal RNA small subunit methyltransferase A"/>
    <property type="match status" value="1"/>
</dbReference>
<dbReference type="Gene3D" id="1.10.8.100">
    <property type="entry name" value="Ribosomal RNA adenine dimethylase-like, domain 2"/>
    <property type="match status" value="1"/>
</dbReference>
<dbReference type="Gene3D" id="3.40.50.150">
    <property type="entry name" value="Vaccinia Virus protein VP39"/>
    <property type="match status" value="1"/>
</dbReference>
<dbReference type="HAMAP" id="MF_00607">
    <property type="entry name" value="16SrRNA_methyltr_A"/>
    <property type="match status" value="1"/>
</dbReference>
<dbReference type="InterPro" id="IPR001737">
    <property type="entry name" value="KsgA/Erm"/>
</dbReference>
<dbReference type="InterPro" id="IPR023165">
    <property type="entry name" value="rRNA_Ade_diMease-like_C"/>
</dbReference>
<dbReference type="InterPro" id="IPR020596">
    <property type="entry name" value="rRNA_Ade_Mease_Trfase_CS"/>
</dbReference>
<dbReference type="InterPro" id="IPR020598">
    <property type="entry name" value="rRNA_Ade_methylase_Trfase_N"/>
</dbReference>
<dbReference type="InterPro" id="IPR011530">
    <property type="entry name" value="rRNA_adenine_dimethylase"/>
</dbReference>
<dbReference type="InterPro" id="IPR029063">
    <property type="entry name" value="SAM-dependent_MTases_sf"/>
</dbReference>
<dbReference type="NCBIfam" id="TIGR00755">
    <property type="entry name" value="ksgA"/>
    <property type="match status" value="1"/>
</dbReference>
<dbReference type="PANTHER" id="PTHR11727">
    <property type="entry name" value="DIMETHYLADENOSINE TRANSFERASE"/>
    <property type="match status" value="1"/>
</dbReference>
<dbReference type="PANTHER" id="PTHR11727:SF7">
    <property type="entry name" value="DIMETHYLADENOSINE TRANSFERASE-RELATED"/>
    <property type="match status" value="1"/>
</dbReference>
<dbReference type="Pfam" id="PF00398">
    <property type="entry name" value="RrnaAD"/>
    <property type="match status" value="1"/>
</dbReference>
<dbReference type="SMART" id="SM00650">
    <property type="entry name" value="rADc"/>
    <property type="match status" value="1"/>
</dbReference>
<dbReference type="SUPFAM" id="SSF53335">
    <property type="entry name" value="S-adenosyl-L-methionine-dependent methyltransferases"/>
    <property type="match status" value="1"/>
</dbReference>
<dbReference type="PROSITE" id="PS01131">
    <property type="entry name" value="RRNA_A_DIMETH"/>
    <property type="match status" value="1"/>
</dbReference>
<dbReference type="PROSITE" id="PS51689">
    <property type="entry name" value="SAM_RNA_A_N6_MT"/>
    <property type="match status" value="1"/>
</dbReference>
<reference key="1">
    <citation type="submission" date="2002-12" db="EMBL/GenBank/DDBJ databases">
        <title>Complete genome sequence of Vibrio vulnificus CMCP6.</title>
        <authorList>
            <person name="Rhee J.H."/>
            <person name="Kim S.Y."/>
            <person name="Chung S.S."/>
            <person name="Kim J.J."/>
            <person name="Moon Y.H."/>
            <person name="Jeong H."/>
            <person name="Choy H.E."/>
        </authorList>
    </citation>
    <scope>NUCLEOTIDE SEQUENCE [LARGE SCALE GENOMIC DNA]</scope>
    <source>
        <strain>CMCP6</strain>
    </source>
</reference>
<organism>
    <name type="scientific">Vibrio vulnificus (strain CMCP6)</name>
    <dbReference type="NCBI Taxonomy" id="216895"/>
    <lineage>
        <taxon>Bacteria</taxon>
        <taxon>Pseudomonadati</taxon>
        <taxon>Pseudomonadota</taxon>
        <taxon>Gammaproteobacteria</taxon>
        <taxon>Vibrionales</taxon>
        <taxon>Vibrionaceae</taxon>
        <taxon>Vibrio</taxon>
    </lineage>
</organism>
<accession>Q8DED2</accession>
<feature type="chain" id="PRO_0000101639" description="Ribosomal RNA small subunit methyltransferase A">
    <location>
        <begin position="1"/>
        <end position="268"/>
    </location>
</feature>
<feature type="binding site" evidence="1">
    <location>
        <position position="18"/>
    </location>
    <ligand>
        <name>S-adenosyl-L-methionine</name>
        <dbReference type="ChEBI" id="CHEBI:59789"/>
    </ligand>
</feature>
<feature type="binding site" evidence="1">
    <location>
        <position position="20"/>
    </location>
    <ligand>
        <name>S-adenosyl-L-methionine</name>
        <dbReference type="ChEBI" id="CHEBI:59789"/>
    </ligand>
</feature>
<feature type="binding site" evidence="1">
    <location>
        <position position="45"/>
    </location>
    <ligand>
        <name>S-adenosyl-L-methionine</name>
        <dbReference type="ChEBI" id="CHEBI:59789"/>
    </ligand>
</feature>
<feature type="binding site" evidence="1">
    <location>
        <position position="66"/>
    </location>
    <ligand>
        <name>S-adenosyl-L-methionine</name>
        <dbReference type="ChEBI" id="CHEBI:59789"/>
    </ligand>
</feature>
<feature type="binding site" evidence="1">
    <location>
        <position position="91"/>
    </location>
    <ligand>
        <name>S-adenosyl-L-methionine</name>
        <dbReference type="ChEBI" id="CHEBI:59789"/>
    </ligand>
</feature>
<feature type="binding site" evidence="1">
    <location>
        <position position="112"/>
    </location>
    <ligand>
        <name>S-adenosyl-L-methionine</name>
        <dbReference type="ChEBI" id="CHEBI:59789"/>
    </ligand>
</feature>
<keyword id="KW-0963">Cytoplasm</keyword>
<keyword id="KW-0489">Methyltransferase</keyword>
<keyword id="KW-0694">RNA-binding</keyword>
<keyword id="KW-0698">rRNA processing</keyword>
<keyword id="KW-0949">S-adenosyl-L-methionine</keyword>
<keyword id="KW-0808">Transferase</keyword>
<sequence length="268" mass="30621">MRNDVHMGHKARKRFGQNFLNDPYIIDGIVSAINPRPGQNLVEIGPGLGAITEPVGREVDKFTVIELDRDLAERLRTHPELADKLTIHEGDAMRFDFTQLVKPNNKLRIFGNLPYNISTPLMFHLFEFHKDIQDMHFMLQKEVVNRLAAGPGSKAYGRLTVMAQYYCKVVPVLEVPPTAFVPPPKVDSAVVRLVPYETLPHPANNLQWLERVCREGFNQRRKTVRNCYKSLMSEQVLEELGVNPGMRPENLTLQQFVAMANWLDANHK</sequence>
<comment type="function">
    <text evidence="1">Specifically dimethylates two adjacent adenosines (A1518 and A1519) in the loop of a conserved hairpin near the 3'-end of 16S rRNA in the 30S particle. May play a critical role in biogenesis of 30S subunits.</text>
</comment>
<comment type="catalytic activity">
    <reaction evidence="1">
        <text>adenosine(1518)/adenosine(1519) in 16S rRNA + 4 S-adenosyl-L-methionine = N(6)-dimethyladenosine(1518)/N(6)-dimethyladenosine(1519) in 16S rRNA + 4 S-adenosyl-L-homocysteine + 4 H(+)</text>
        <dbReference type="Rhea" id="RHEA:19609"/>
        <dbReference type="Rhea" id="RHEA-COMP:10232"/>
        <dbReference type="Rhea" id="RHEA-COMP:10233"/>
        <dbReference type="ChEBI" id="CHEBI:15378"/>
        <dbReference type="ChEBI" id="CHEBI:57856"/>
        <dbReference type="ChEBI" id="CHEBI:59789"/>
        <dbReference type="ChEBI" id="CHEBI:74411"/>
        <dbReference type="ChEBI" id="CHEBI:74493"/>
        <dbReference type="EC" id="2.1.1.182"/>
    </reaction>
</comment>
<comment type="subcellular location">
    <subcellularLocation>
        <location evidence="1">Cytoplasm</location>
    </subcellularLocation>
</comment>
<comment type="similarity">
    <text evidence="1">Belongs to the class I-like SAM-binding methyltransferase superfamily. rRNA adenine N(6)-methyltransferase family. RsmA subfamily.</text>
</comment>
<name>RSMA_VIBVU</name>
<proteinExistence type="inferred from homology"/>
<evidence type="ECO:0000255" key="1">
    <source>
        <dbReference type="HAMAP-Rule" id="MF_00607"/>
    </source>
</evidence>
<gene>
    <name evidence="1" type="primary">rsmA</name>
    <name evidence="1" type="synonym">ksgA</name>
    <name type="ordered locus">VV1_0663</name>
</gene>
<protein>
    <recommendedName>
        <fullName evidence="1">Ribosomal RNA small subunit methyltransferase A</fullName>
        <ecNumber evidence="1">2.1.1.182</ecNumber>
    </recommendedName>
    <alternativeName>
        <fullName evidence="1">16S rRNA (adenine(1518)-N(6)/adenine(1519)-N(6))-dimethyltransferase</fullName>
    </alternativeName>
    <alternativeName>
        <fullName evidence="1">16S rRNA dimethyladenosine transferase</fullName>
    </alternativeName>
    <alternativeName>
        <fullName evidence="1">16S rRNA dimethylase</fullName>
    </alternativeName>
    <alternativeName>
        <fullName evidence="1">S-adenosylmethionine-6-N', N'-adenosyl(rRNA) dimethyltransferase</fullName>
    </alternativeName>
</protein>